<reference key="1">
    <citation type="journal article" date="2003" name="Nat. Genet.">
        <title>Comparative analysis of the genome sequences of Bordetella pertussis, Bordetella parapertussis and Bordetella bronchiseptica.</title>
        <authorList>
            <person name="Parkhill J."/>
            <person name="Sebaihia M."/>
            <person name="Preston A."/>
            <person name="Murphy L.D."/>
            <person name="Thomson N.R."/>
            <person name="Harris D.E."/>
            <person name="Holden M.T.G."/>
            <person name="Churcher C.M."/>
            <person name="Bentley S.D."/>
            <person name="Mungall K.L."/>
            <person name="Cerdeno-Tarraga A.-M."/>
            <person name="Temple L."/>
            <person name="James K.D."/>
            <person name="Harris B."/>
            <person name="Quail M.A."/>
            <person name="Achtman M."/>
            <person name="Atkin R."/>
            <person name="Baker S."/>
            <person name="Basham D."/>
            <person name="Bason N."/>
            <person name="Cherevach I."/>
            <person name="Chillingworth T."/>
            <person name="Collins M."/>
            <person name="Cronin A."/>
            <person name="Davis P."/>
            <person name="Doggett J."/>
            <person name="Feltwell T."/>
            <person name="Goble A."/>
            <person name="Hamlin N."/>
            <person name="Hauser H."/>
            <person name="Holroyd S."/>
            <person name="Jagels K."/>
            <person name="Leather S."/>
            <person name="Moule S."/>
            <person name="Norberczak H."/>
            <person name="O'Neil S."/>
            <person name="Ormond D."/>
            <person name="Price C."/>
            <person name="Rabbinowitsch E."/>
            <person name="Rutter S."/>
            <person name="Sanders M."/>
            <person name="Saunders D."/>
            <person name="Seeger K."/>
            <person name="Sharp S."/>
            <person name="Simmonds M."/>
            <person name="Skelton J."/>
            <person name="Squares R."/>
            <person name="Squares S."/>
            <person name="Stevens K."/>
            <person name="Unwin L."/>
            <person name="Whitehead S."/>
            <person name="Barrell B.G."/>
            <person name="Maskell D.J."/>
        </authorList>
    </citation>
    <scope>NUCLEOTIDE SEQUENCE [LARGE SCALE GENOMIC DNA]</scope>
    <source>
        <strain>ATCC BAA-588 / NCTC 13252 / RB50</strain>
    </source>
</reference>
<sequence length="596" mass="67165">MRTCYTGQVCRDHLGQTVTLYGWVNRRRDHGGVIFIDLRDRTGLAQIVFDPDNAEAFGTAERLRNEFCISITGLVRLRPEGTANAELASGEVEVLCQQVEILNASVTPPFQLDDDNLSETTRLTHRVLDLRRPQMQHNLMLRYRVSIEVRKYLDQLGFIDIETPMLTKSTPEGARDYLVPSRVNAGYFFALPQSPQLFKQMLMVSGFDRYYQITKCFRDEDLRADRQPEFTQIDCETSFLNEVEIREIFEGMIRHVFKVVQDVDLPTPFPIMSWTEAMQRYGSDKPDLRVNLEFTDMTDVMRDVDFKVFASAATTAGSRVVALRVQGGGEMSRSEIDAYTQFVGIYGAKGLAYIKVNDVAKGREGLQSPIVKNLHDAALAELVKRTGAQNGDIIFFGADRAKVVNDAIGALRVKIGHSEFGKKAGLFSGGWKPLWVVDFPMFEYDEEENRYTAAHHPFTSPKDGHEDFLESDPGKAVAKAYDMVLNGWEIGGGSVRIHREEVQSKVFRALKIDAEEAREKFGFLLDALQYGAPPHGGIAFGLDRIITMMAGAESIRDVIAFPKTQRAQCLLTGAPSEVDEKQLRELHIRLRNVEVK</sequence>
<accession>Q7WR42</accession>
<gene>
    <name evidence="1" type="primary">aspS</name>
    <name type="ordered locus">BB0115</name>
</gene>
<dbReference type="EC" id="6.1.1.23" evidence="1"/>
<dbReference type="EMBL" id="BX640437">
    <property type="protein sequence ID" value="CAE30616.1"/>
    <property type="molecule type" value="Genomic_DNA"/>
</dbReference>
<dbReference type="RefSeq" id="WP_003807038.1">
    <property type="nucleotide sequence ID" value="NC_002927.3"/>
</dbReference>
<dbReference type="SMR" id="Q7WR42"/>
<dbReference type="GeneID" id="93206345"/>
<dbReference type="KEGG" id="bbr:BB0115"/>
<dbReference type="eggNOG" id="COG0173">
    <property type="taxonomic scope" value="Bacteria"/>
</dbReference>
<dbReference type="HOGENOM" id="CLU_014330_3_2_4"/>
<dbReference type="Proteomes" id="UP000001027">
    <property type="component" value="Chromosome"/>
</dbReference>
<dbReference type="GO" id="GO:0005737">
    <property type="term" value="C:cytoplasm"/>
    <property type="evidence" value="ECO:0007669"/>
    <property type="project" value="UniProtKB-SubCell"/>
</dbReference>
<dbReference type="GO" id="GO:0004815">
    <property type="term" value="F:aspartate-tRNA ligase activity"/>
    <property type="evidence" value="ECO:0007669"/>
    <property type="project" value="UniProtKB-UniRule"/>
</dbReference>
<dbReference type="GO" id="GO:0050560">
    <property type="term" value="F:aspartate-tRNA(Asn) ligase activity"/>
    <property type="evidence" value="ECO:0007669"/>
    <property type="project" value="UniProtKB-EC"/>
</dbReference>
<dbReference type="GO" id="GO:0005524">
    <property type="term" value="F:ATP binding"/>
    <property type="evidence" value="ECO:0007669"/>
    <property type="project" value="UniProtKB-UniRule"/>
</dbReference>
<dbReference type="GO" id="GO:0003676">
    <property type="term" value="F:nucleic acid binding"/>
    <property type="evidence" value="ECO:0007669"/>
    <property type="project" value="InterPro"/>
</dbReference>
<dbReference type="GO" id="GO:0006422">
    <property type="term" value="P:aspartyl-tRNA aminoacylation"/>
    <property type="evidence" value="ECO:0007669"/>
    <property type="project" value="UniProtKB-UniRule"/>
</dbReference>
<dbReference type="CDD" id="cd00777">
    <property type="entry name" value="AspRS_core"/>
    <property type="match status" value="1"/>
</dbReference>
<dbReference type="CDD" id="cd04317">
    <property type="entry name" value="EcAspRS_like_N"/>
    <property type="match status" value="1"/>
</dbReference>
<dbReference type="Gene3D" id="3.30.930.10">
    <property type="entry name" value="Bira Bifunctional Protein, Domain 2"/>
    <property type="match status" value="1"/>
</dbReference>
<dbReference type="Gene3D" id="3.30.1360.30">
    <property type="entry name" value="GAD-like domain"/>
    <property type="match status" value="1"/>
</dbReference>
<dbReference type="Gene3D" id="2.40.50.140">
    <property type="entry name" value="Nucleic acid-binding proteins"/>
    <property type="match status" value="1"/>
</dbReference>
<dbReference type="HAMAP" id="MF_00044">
    <property type="entry name" value="Asp_tRNA_synth_type1"/>
    <property type="match status" value="1"/>
</dbReference>
<dbReference type="InterPro" id="IPR004364">
    <property type="entry name" value="Aa-tRNA-synt_II"/>
</dbReference>
<dbReference type="InterPro" id="IPR006195">
    <property type="entry name" value="aa-tRNA-synth_II"/>
</dbReference>
<dbReference type="InterPro" id="IPR045864">
    <property type="entry name" value="aa-tRNA-synth_II/BPL/LPL"/>
</dbReference>
<dbReference type="InterPro" id="IPR004524">
    <property type="entry name" value="Asp-tRNA-ligase_1"/>
</dbReference>
<dbReference type="InterPro" id="IPR047089">
    <property type="entry name" value="Asp-tRNA-ligase_1_N"/>
</dbReference>
<dbReference type="InterPro" id="IPR002312">
    <property type="entry name" value="Asp/Asn-tRNA-synth_IIb"/>
</dbReference>
<dbReference type="InterPro" id="IPR047090">
    <property type="entry name" value="AspRS_core"/>
</dbReference>
<dbReference type="InterPro" id="IPR004115">
    <property type="entry name" value="GAD-like_sf"/>
</dbReference>
<dbReference type="InterPro" id="IPR029351">
    <property type="entry name" value="GAD_dom"/>
</dbReference>
<dbReference type="InterPro" id="IPR012340">
    <property type="entry name" value="NA-bd_OB-fold"/>
</dbReference>
<dbReference type="InterPro" id="IPR004365">
    <property type="entry name" value="NA-bd_OB_tRNA"/>
</dbReference>
<dbReference type="NCBIfam" id="TIGR00459">
    <property type="entry name" value="aspS_bact"/>
    <property type="match status" value="1"/>
</dbReference>
<dbReference type="NCBIfam" id="NF001750">
    <property type="entry name" value="PRK00476.1"/>
    <property type="match status" value="1"/>
</dbReference>
<dbReference type="PANTHER" id="PTHR22594:SF5">
    <property type="entry name" value="ASPARTATE--TRNA LIGASE, MITOCHONDRIAL"/>
    <property type="match status" value="1"/>
</dbReference>
<dbReference type="PANTHER" id="PTHR22594">
    <property type="entry name" value="ASPARTYL/LYSYL-TRNA SYNTHETASE"/>
    <property type="match status" value="1"/>
</dbReference>
<dbReference type="Pfam" id="PF02938">
    <property type="entry name" value="GAD"/>
    <property type="match status" value="1"/>
</dbReference>
<dbReference type="Pfam" id="PF00152">
    <property type="entry name" value="tRNA-synt_2"/>
    <property type="match status" value="1"/>
</dbReference>
<dbReference type="Pfam" id="PF01336">
    <property type="entry name" value="tRNA_anti-codon"/>
    <property type="match status" value="1"/>
</dbReference>
<dbReference type="PRINTS" id="PR01042">
    <property type="entry name" value="TRNASYNTHASP"/>
</dbReference>
<dbReference type="SUPFAM" id="SSF55681">
    <property type="entry name" value="Class II aaRS and biotin synthetases"/>
    <property type="match status" value="1"/>
</dbReference>
<dbReference type="SUPFAM" id="SSF55261">
    <property type="entry name" value="GAD domain-like"/>
    <property type="match status" value="1"/>
</dbReference>
<dbReference type="SUPFAM" id="SSF50249">
    <property type="entry name" value="Nucleic acid-binding proteins"/>
    <property type="match status" value="1"/>
</dbReference>
<dbReference type="PROSITE" id="PS50862">
    <property type="entry name" value="AA_TRNA_LIGASE_II"/>
    <property type="match status" value="1"/>
</dbReference>
<organism>
    <name type="scientific">Bordetella bronchiseptica (strain ATCC BAA-588 / NCTC 13252 / RB50)</name>
    <name type="common">Alcaligenes bronchisepticus</name>
    <dbReference type="NCBI Taxonomy" id="257310"/>
    <lineage>
        <taxon>Bacteria</taxon>
        <taxon>Pseudomonadati</taxon>
        <taxon>Pseudomonadota</taxon>
        <taxon>Betaproteobacteria</taxon>
        <taxon>Burkholderiales</taxon>
        <taxon>Alcaligenaceae</taxon>
        <taxon>Bordetella</taxon>
    </lineage>
</organism>
<feature type="chain" id="PRO_0000110835" description="Aspartate--tRNA(Asp/Asn) ligase">
    <location>
        <begin position="1"/>
        <end position="596"/>
    </location>
</feature>
<feature type="region of interest" description="Aspartate" evidence="1">
    <location>
        <begin position="196"/>
        <end position="199"/>
    </location>
</feature>
<feature type="binding site" evidence="1">
    <location>
        <position position="172"/>
    </location>
    <ligand>
        <name>L-aspartate</name>
        <dbReference type="ChEBI" id="CHEBI:29991"/>
    </ligand>
</feature>
<feature type="binding site" evidence="1">
    <location>
        <begin position="218"/>
        <end position="220"/>
    </location>
    <ligand>
        <name>ATP</name>
        <dbReference type="ChEBI" id="CHEBI:30616"/>
    </ligand>
</feature>
<feature type="binding site" evidence="1">
    <location>
        <position position="218"/>
    </location>
    <ligand>
        <name>L-aspartate</name>
        <dbReference type="ChEBI" id="CHEBI:29991"/>
    </ligand>
</feature>
<feature type="binding site" evidence="1">
    <location>
        <position position="227"/>
    </location>
    <ligand>
        <name>ATP</name>
        <dbReference type="ChEBI" id="CHEBI:30616"/>
    </ligand>
</feature>
<feature type="binding site" evidence="1">
    <location>
        <position position="455"/>
    </location>
    <ligand>
        <name>L-aspartate</name>
        <dbReference type="ChEBI" id="CHEBI:29991"/>
    </ligand>
</feature>
<feature type="binding site" evidence="1">
    <location>
        <position position="489"/>
    </location>
    <ligand>
        <name>ATP</name>
        <dbReference type="ChEBI" id="CHEBI:30616"/>
    </ligand>
</feature>
<feature type="binding site" evidence="1">
    <location>
        <position position="496"/>
    </location>
    <ligand>
        <name>L-aspartate</name>
        <dbReference type="ChEBI" id="CHEBI:29991"/>
    </ligand>
</feature>
<feature type="binding site" evidence="1">
    <location>
        <begin position="541"/>
        <end position="544"/>
    </location>
    <ligand>
        <name>ATP</name>
        <dbReference type="ChEBI" id="CHEBI:30616"/>
    </ligand>
</feature>
<feature type="site" description="Important for tRNA non-discrimination" evidence="1">
    <location>
        <position position="30"/>
    </location>
</feature>
<feature type="site" description="Important for tRNA non-discrimination" evidence="1">
    <location>
        <position position="81"/>
    </location>
</feature>
<evidence type="ECO:0000255" key="1">
    <source>
        <dbReference type="HAMAP-Rule" id="MF_00044"/>
    </source>
</evidence>
<comment type="function">
    <text evidence="1">Aspartyl-tRNA synthetase with relaxed tRNA specificity since it is able to aspartylate not only its cognate tRNA(Asp) but also tRNA(Asn). Reaction proceeds in two steps: L-aspartate is first activated by ATP to form Asp-AMP and then transferred to the acceptor end of tRNA(Asp/Asn).</text>
</comment>
<comment type="catalytic activity">
    <reaction evidence="1">
        <text>tRNA(Asx) + L-aspartate + ATP = L-aspartyl-tRNA(Asx) + AMP + diphosphate</text>
        <dbReference type="Rhea" id="RHEA:18349"/>
        <dbReference type="Rhea" id="RHEA-COMP:9710"/>
        <dbReference type="Rhea" id="RHEA-COMP:9711"/>
        <dbReference type="ChEBI" id="CHEBI:29991"/>
        <dbReference type="ChEBI" id="CHEBI:30616"/>
        <dbReference type="ChEBI" id="CHEBI:33019"/>
        <dbReference type="ChEBI" id="CHEBI:78442"/>
        <dbReference type="ChEBI" id="CHEBI:78516"/>
        <dbReference type="ChEBI" id="CHEBI:456215"/>
        <dbReference type="EC" id="6.1.1.23"/>
    </reaction>
</comment>
<comment type="subunit">
    <text evidence="1">Homodimer.</text>
</comment>
<comment type="subcellular location">
    <subcellularLocation>
        <location evidence="1">Cytoplasm</location>
    </subcellularLocation>
</comment>
<comment type="similarity">
    <text evidence="1">Belongs to the class-II aminoacyl-tRNA synthetase family. Type 1 subfamily.</text>
</comment>
<protein>
    <recommendedName>
        <fullName evidence="1">Aspartate--tRNA(Asp/Asn) ligase</fullName>
        <ecNumber evidence="1">6.1.1.23</ecNumber>
    </recommendedName>
    <alternativeName>
        <fullName evidence="1">Aspartyl-tRNA synthetase</fullName>
        <shortName evidence="1">AspRS</shortName>
    </alternativeName>
    <alternativeName>
        <fullName evidence="1">Non-discriminating aspartyl-tRNA synthetase</fullName>
        <shortName evidence="1">ND-AspRS</shortName>
    </alternativeName>
</protein>
<keyword id="KW-0030">Aminoacyl-tRNA synthetase</keyword>
<keyword id="KW-0067">ATP-binding</keyword>
<keyword id="KW-0963">Cytoplasm</keyword>
<keyword id="KW-0436">Ligase</keyword>
<keyword id="KW-0547">Nucleotide-binding</keyword>
<keyword id="KW-0648">Protein biosynthesis</keyword>
<proteinExistence type="inferred from homology"/>
<name>SYDND_BORBR</name>